<keyword id="KW-0067">ATP-binding</keyword>
<keyword id="KW-0315">Glutamine amidotransferase</keyword>
<keyword id="KW-0436">Ligase</keyword>
<keyword id="KW-0460">Magnesium</keyword>
<keyword id="KW-0479">Metal-binding</keyword>
<keyword id="KW-0547">Nucleotide-binding</keyword>
<keyword id="KW-0665">Pyrimidine biosynthesis</keyword>
<protein>
    <recommendedName>
        <fullName evidence="1">CTP synthase</fullName>
        <ecNumber evidence="1">6.3.4.2</ecNumber>
    </recommendedName>
    <alternativeName>
        <fullName evidence="1">Cytidine 5'-triphosphate synthase</fullName>
    </alternativeName>
    <alternativeName>
        <fullName evidence="1">Cytidine triphosphate synthetase</fullName>
        <shortName evidence="1">CTP synthetase</shortName>
        <shortName evidence="1">CTPS</shortName>
    </alternativeName>
    <alternativeName>
        <fullName evidence="1">UTP--ammonia ligase</fullName>
    </alternativeName>
</protein>
<dbReference type="EC" id="6.3.4.2" evidence="1"/>
<dbReference type="EMBL" id="CP000255">
    <property type="protein sequence ID" value="ABD21041.1"/>
    <property type="molecule type" value="Genomic_DNA"/>
</dbReference>
<dbReference type="RefSeq" id="WP_000159960.1">
    <property type="nucleotide sequence ID" value="NZ_CP027476.1"/>
</dbReference>
<dbReference type="SMR" id="Q2FF01"/>
<dbReference type="MEROPS" id="C26.964"/>
<dbReference type="KEGG" id="saa:SAUSA300_2081"/>
<dbReference type="HOGENOM" id="CLU_011675_5_0_9"/>
<dbReference type="OMA" id="EFNNAYR"/>
<dbReference type="UniPathway" id="UPA00159">
    <property type="reaction ID" value="UER00277"/>
</dbReference>
<dbReference type="Proteomes" id="UP000001939">
    <property type="component" value="Chromosome"/>
</dbReference>
<dbReference type="GO" id="GO:0005829">
    <property type="term" value="C:cytosol"/>
    <property type="evidence" value="ECO:0007669"/>
    <property type="project" value="TreeGrafter"/>
</dbReference>
<dbReference type="GO" id="GO:0005524">
    <property type="term" value="F:ATP binding"/>
    <property type="evidence" value="ECO:0007669"/>
    <property type="project" value="UniProtKB-KW"/>
</dbReference>
<dbReference type="GO" id="GO:0003883">
    <property type="term" value="F:CTP synthase activity"/>
    <property type="evidence" value="ECO:0007669"/>
    <property type="project" value="UniProtKB-UniRule"/>
</dbReference>
<dbReference type="GO" id="GO:0004359">
    <property type="term" value="F:glutaminase activity"/>
    <property type="evidence" value="ECO:0007669"/>
    <property type="project" value="RHEA"/>
</dbReference>
<dbReference type="GO" id="GO:0042802">
    <property type="term" value="F:identical protein binding"/>
    <property type="evidence" value="ECO:0007669"/>
    <property type="project" value="TreeGrafter"/>
</dbReference>
<dbReference type="GO" id="GO:0046872">
    <property type="term" value="F:metal ion binding"/>
    <property type="evidence" value="ECO:0007669"/>
    <property type="project" value="UniProtKB-KW"/>
</dbReference>
<dbReference type="GO" id="GO:0044210">
    <property type="term" value="P:'de novo' CTP biosynthetic process"/>
    <property type="evidence" value="ECO:0007669"/>
    <property type="project" value="UniProtKB-UniRule"/>
</dbReference>
<dbReference type="GO" id="GO:0019856">
    <property type="term" value="P:pyrimidine nucleobase biosynthetic process"/>
    <property type="evidence" value="ECO:0007669"/>
    <property type="project" value="TreeGrafter"/>
</dbReference>
<dbReference type="CDD" id="cd03113">
    <property type="entry name" value="CTPS_N"/>
    <property type="match status" value="1"/>
</dbReference>
<dbReference type="CDD" id="cd01746">
    <property type="entry name" value="GATase1_CTP_Synthase"/>
    <property type="match status" value="1"/>
</dbReference>
<dbReference type="FunFam" id="3.40.50.300:FF:000009">
    <property type="entry name" value="CTP synthase"/>
    <property type="match status" value="1"/>
</dbReference>
<dbReference type="FunFam" id="3.40.50.880:FF:000002">
    <property type="entry name" value="CTP synthase"/>
    <property type="match status" value="1"/>
</dbReference>
<dbReference type="Gene3D" id="3.40.50.880">
    <property type="match status" value="1"/>
</dbReference>
<dbReference type="Gene3D" id="3.40.50.300">
    <property type="entry name" value="P-loop containing nucleotide triphosphate hydrolases"/>
    <property type="match status" value="1"/>
</dbReference>
<dbReference type="HAMAP" id="MF_01227">
    <property type="entry name" value="PyrG"/>
    <property type="match status" value="1"/>
</dbReference>
<dbReference type="InterPro" id="IPR029062">
    <property type="entry name" value="Class_I_gatase-like"/>
</dbReference>
<dbReference type="InterPro" id="IPR004468">
    <property type="entry name" value="CTP_synthase"/>
</dbReference>
<dbReference type="InterPro" id="IPR017456">
    <property type="entry name" value="CTP_synthase_N"/>
</dbReference>
<dbReference type="InterPro" id="IPR017926">
    <property type="entry name" value="GATASE"/>
</dbReference>
<dbReference type="InterPro" id="IPR033828">
    <property type="entry name" value="GATase1_CTP_Synthase"/>
</dbReference>
<dbReference type="InterPro" id="IPR027417">
    <property type="entry name" value="P-loop_NTPase"/>
</dbReference>
<dbReference type="NCBIfam" id="NF003792">
    <property type="entry name" value="PRK05380.1"/>
    <property type="match status" value="1"/>
</dbReference>
<dbReference type="NCBIfam" id="TIGR00337">
    <property type="entry name" value="PyrG"/>
    <property type="match status" value="1"/>
</dbReference>
<dbReference type="PANTHER" id="PTHR11550">
    <property type="entry name" value="CTP SYNTHASE"/>
    <property type="match status" value="1"/>
</dbReference>
<dbReference type="PANTHER" id="PTHR11550:SF0">
    <property type="entry name" value="CTP SYNTHASE-RELATED"/>
    <property type="match status" value="1"/>
</dbReference>
<dbReference type="Pfam" id="PF06418">
    <property type="entry name" value="CTP_synth_N"/>
    <property type="match status" value="1"/>
</dbReference>
<dbReference type="Pfam" id="PF00117">
    <property type="entry name" value="GATase"/>
    <property type="match status" value="1"/>
</dbReference>
<dbReference type="SUPFAM" id="SSF52317">
    <property type="entry name" value="Class I glutamine amidotransferase-like"/>
    <property type="match status" value="1"/>
</dbReference>
<dbReference type="SUPFAM" id="SSF52540">
    <property type="entry name" value="P-loop containing nucleoside triphosphate hydrolases"/>
    <property type="match status" value="1"/>
</dbReference>
<dbReference type="PROSITE" id="PS51273">
    <property type="entry name" value="GATASE_TYPE_1"/>
    <property type="match status" value="1"/>
</dbReference>
<comment type="function">
    <text evidence="1">Catalyzes the ATP-dependent amination of UTP to CTP with either L-glutamine or ammonia as the source of nitrogen. Regulates intracellular CTP levels through interactions with the four ribonucleotide triphosphates.</text>
</comment>
<comment type="catalytic activity">
    <reaction evidence="1">
        <text>UTP + L-glutamine + ATP + H2O = CTP + L-glutamate + ADP + phosphate + 2 H(+)</text>
        <dbReference type="Rhea" id="RHEA:26426"/>
        <dbReference type="ChEBI" id="CHEBI:15377"/>
        <dbReference type="ChEBI" id="CHEBI:15378"/>
        <dbReference type="ChEBI" id="CHEBI:29985"/>
        <dbReference type="ChEBI" id="CHEBI:30616"/>
        <dbReference type="ChEBI" id="CHEBI:37563"/>
        <dbReference type="ChEBI" id="CHEBI:43474"/>
        <dbReference type="ChEBI" id="CHEBI:46398"/>
        <dbReference type="ChEBI" id="CHEBI:58359"/>
        <dbReference type="ChEBI" id="CHEBI:456216"/>
        <dbReference type="EC" id="6.3.4.2"/>
    </reaction>
</comment>
<comment type="catalytic activity">
    <reaction evidence="1">
        <text>L-glutamine + H2O = L-glutamate + NH4(+)</text>
        <dbReference type="Rhea" id="RHEA:15889"/>
        <dbReference type="ChEBI" id="CHEBI:15377"/>
        <dbReference type="ChEBI" id="CHEBI:28938"/>
        <dbReference type="ChEBI" id="CHEBI:29985"/>
        <dbReference type="ChEBI" id="CHEBI:58359"/>
    </reaction>
</comment>
<comment type="catalytic activity">
    <reaction evidence="1">
        <text>UTP + NH4(+) + ATP = CTP + ADP + phosphate + 2 H(+)</text>
        <dbReference type="Rhea" id="RHEA:16597"/>
        <dbReference type="ChEBI" id="CHEBI:15378"/>
        <dbReference type="ChEBI" id="CHEBI:28938"/>
        <dbReference type="ChEBI" id="CHEBI:30616"/>
        <dbReference type="ChEBI" id="CHEBI:37563"/>
        <dbReference type="ChEBI" id="CHEBI:43474"/>
        <dbReference type="ChEBI" id="CHEBI:46398"/>
        <dbReference type="ChEBI" id="CHEBI:456216"/>
    </reaction>
</comment>
<comment type="activity regulation">
    <text evidence="1">Allosterically activated by GTP, when glutamine is the substrate; GTP has no effect on the reaction when ammonia is the substrate. The allosteric effector GTP functions by stabilizing the protein conformation that binds the tetrahedral intermediate(s) formed during glutamine hydrolysis. Inhibited by the product CTP, via allosteric rather than competitive inhibition.</text>
</comment>
<comment type="pathway">
    <text evidence="1">Pyrimidine metabolism; CTP biosynthesis via de novo pathway; CTP from UDP: step 2/2.</text>
</comment>
<comment type="subunit">
    <text evidence="1">Homotetramer.</text>
</comment>
<comment type="miscellaneous">
    <text evidence="1">CTPSs have evolved a hybrid strategy for distinguishing between UTP and CTP. The overlapping regions of the product feedback inhibitory and substrate sites recognize a common feature in both compounds, the triphosphate moiety. To differentiate isosteric substrate and product pyrimidine rings, an additional pocket far from the expected kinase/ligase catalytic site, specifically recognizes the cytosine and ribose portions of the product inhibitor.</text>
</comment>
<comment type="similarity">
    <text evidence="1">Belongs to the CTP synthase family.</text>
</comment>
<reference key="1">
    <citation type="journal article" date="2006" name="Lancet">
        <title>Complete genome sequence of USA300, an epidemic clone of community-acquired meticillin-resistant Staphylococcus aureus.</title>
        <authorList>
            <person name="Diep B.A."/>
            <person name="Gill S.R."/>
            <person name="Chang R.F."/>
            <person name="Phan T.H."/>
            <person name="Chen J.H."/>
            <person name="Davidson M.G."/>
            <person name="Lin F."/>
            <person name="Lin J."/>
            <person name="Carleton H.A."/>
            <person name="Mongodin E.F."/>
            <person name="Sensabaugh G.F."/>
            <person name="Perdreau-Remington F."/>
        </authorList>
    </citation>
    <scope>NUCLEOTIDE SEQUENCE [LARGE SCALE GENOMIC DNA]</scope>
    <source>
        <strain>USA300</strain>
    </source>
</reference>
<sequence length="536" mass="59992">MTKFIFVTGGVVSSLGKGITASSLGRLLKDRGLNVTIQKFDPYLNVDPGTMSPYQHGEVFVTDDGAETDLDLGHYERFIDINLNKFSNVTAGKVYSHVLKKERRGDYLGGTVQVIPHITNEIKERLLLAGESTNADVVITEIGGTTGDIESLPFIEAIRQIRSDLGRENVMYVHCTLLPYIKAAGEMKTKPTQHSVKELRGLGIQPDLIVVRTEYEMTQDLKDKIALFCDINKESVIECRDADSLYEIPLQLSQQNMDDIVIKRLQLNAKYETQLDEWKQLLDIVNNLDGKITIGLVGKYVSLQDAYLSVVESLKHAGYPFAKDIDIRWIDSSEVTDENAAEYLADVDGILVPGGFGFRASEGKISAIKYARENNVPFFGICLGMQLATVEFSRNVLGLEGAHSAELDPATPYPIIDLLPEQKDIEDLGGTLRLGLYPCSIKEGTLAQDVYGKAEIEERHRHRYEFNNDYREQLEANGMVISGTSPDGRLVEMVEIPTNDFFIACQFHPEFLSRPNRPHPIFKSFIEASLKYQQNK</sequence>
<accession>Q2FF01</accession>
<organism>
    <name type="scientific">Staphylococcus aureus (strain USA300)</name>
    <dbReference type="NCBI Taxonomy" id="367830"/>
    <lineage>
        <taxon>Bacteria</taxon>
        <taxon>Bacillati</taxon>
        <taxon>Bacillota</taxon>
        <taxon>Bacilli</taxon>
        <taxon>Bacillales</taxon>
        <taxon>Staphylococcaceae</taxon>
        <taxon>Staphylococcus</taxon>
    </lineage>
</organism>
<proteinExistence type="inferred from homology"/>
<gene>
    <name evidence="1" type="primary">pyrG</name>
    <name type="ordered locus">SAUSA300_2081</name>
</gene>
<feature type="chain" id="PRO_0000266226" description="CTP synthase">
    <location>
        <begin position="1"/>
        <end position="536"/>
    </location>
</feature>
<feature type="domain" description="Glutamine amidotransferase type-1" evidence="1">
    <location>
        <begin position="293"/>
        <end position="535"/>
    </location>
</feature>
<feature type="region of interest" description="Amidoligase domain" evidence="1">
    <location>
        <begin position="1"/>
        <end position="267"/>
    </location>
</feature>
<feature type="active site" description="Nucleophile; for glutamine hydrolysis" evidence="1">
    <location>
        <position position="382"/>
    </location>
</feature>
<feature type="active site" evidence="1">
    <location>
        <position position="508"/>
    </location>
</feature>
<feature type="active site" evidence="1">
    <location>
        <position position="510"/>
    </location>
</feature>
<feature type="binding site" evidence="1">
    <location>
        <position position="13"/>
    </location>
    <ligand>
        <name>CTP</name>
        <dbReference type="ChEBI" id="CHEBI:37563"/>
        <note>allosteric inhibitor</note>
    </ligand>
</feature>
<feature type="binding site" evidence="1">
    <location>
        <position position="13"/>
    </location>
    <ligand>
        <name>UTP</name>
        <dbReference type="ChEBI" id="CHEBI:46398"/>
    </ligand>
</feature>
<feature type="binding site" evidence="1">
    <location>
        <begin position="14"/>
        <end position="19"/>
    </location>
    <ligand>
        <name>ATP</name>
        <dbReference type="ChEBI" id="CHEBI:30616"/>
    </ligand>
</feature>
<feature type="binding site" evidence="1">
    <location>
        <position position="54"/>
    </location>
    <ligand>
        <name>L-glutamine</name>
        <dbReference type="ChEBI" id="CHEBI:58359"/>
    </ligand>
</feature>
<feature type="binding site" evidence="1">
    <location>
        <position position="71"/>
    </location>
    <ligand>
        <name>ATP</name>
        <dbReference type="ChEBI" id="CHEBI:30616"/>
    </ligand>
</feature>
<feature type="binding site" evidence="1">
    <location>
        <position position="71"/>
    </location>
    <ligand>
        <name>Mg(2+)</name>
        <dbReference type="ChEBI" id="CHEBI:18420"/>
    </ligand>
</feature>
<feature type="binding site" evidence="1">
    <location>
        <position position="141"/>
    </location>
    <ligand>
        <name>Mg(2+)</name>
        <dbReference type="ChEBI" id="CHEBI:18420"/>
    </ligand>
</feature>
<feature type="binding site" evidence="1">
    <location>
        <begin position="148"/>
        <end position="150"/>
    </location>
    <ligand>
        <name>CTP</name>
        <dbReference type="ChEBI" id="CHEBI:37563"/>
        <note>allosteric inhibitor</note>
    </ligand>
</feature>
<feature type="binding site" evidence="1">
    <location>
        <begin position="188"/>
        <end position="193"/>
    </location>
    <ligand>
        <name>CTP</name>
        <dbReference type="ChEBI" id="CHEBI:37563"/>
        <note>allosteric inhibitor</note>
    </ligand>
</feature>
<feature type="binding site" evidence="1">
    <location>
        <begin position="188"/>
        <end position="193"/>
    </location>
    <ligand>
        <name>UTP</name>
        <dbReference type="ChEBI" id="CHEBI:46398"/>
    </ligand>
</feature>
<feature type="binding site" evidence="1">
    <location>
        <position position="224"/>
    </location>
    <ligand>
        <name>CTP</name>
        <dbReference type="ChEBI" id="CHEBI:37563"/>
        <note>allosteric inhibitor</note>
    </ligand>
</feature>
<feature type="binding site" evidence="1">
    <location>
        <position position="224"/>
    </location>
    <ligand>
        <name>UTP</name>
        <dbReference type="ChEBI" id="CHEBI:46398"/>
    </ligand>
</feature>
<feature type="binding site" evidence="1">
    <location>
        <begin position="240"/>
        <end position="242"/>
    </location>
    <ligand>
        <name>ATP</name>
        <dbReference type="ChEBI" id="CHEBI:30616"/>
    </ligand>
</feature>
<feature type="binding site" evidence="1">
    <location>
        <position position="355"/>
    </location>
    <ligand>
        <name>L-glutamine</name>
        <dbReference type="ChEBI" id="CHEBI:58359"/>
    </ligand>
</feature>
<feature type="binding site" evidence="1">
    <location>
        <begin position="383"/>
        <end position="386"/>
    </location>
    <ligand>
        <name>L-glutamine</name>
        <dbReference type="ChEBI" id="CHEBI:58359"/>
    </ligand>
</feature>
<feature type="binding site" evidence="1">
    <location>
        <position position="406"/>
    </location>
    <ligand>
        <name>L-glutamine</name>
        <dbReference type="ChEBI" id="CHEBI:58359"/>
    </ligand>
</feature>
<feature type="binding site" evidence="1">
    <location>
        <position position="463"/>
    </location>
    <ligand>
        <name>L-glutamine</name>
        <dbReference type="ChEBI" id="CHEBI:58359"/>
    </ligand>
</feature>
<name>PYRG_STAA3</name>
<evidence type="ECO:0000255" key="1">
    <source>
        <dbReference type="HAMAP-Rule" id="MF_01227"/>
    </source>
</evidence>